<evidence type="ECO:0000305" key="1"/>
<name>UL79_HHV7J</name>
<feature type="chain" id="PRO_0000116224" description="Protein U52">
    <location>
        <begin position="1"/>
        <end position="254"/>
    </location>
</feature>
<accession>P52470</accession>
<protein>
    <recommendedName>
        <fullName>Protein U52</fullName>
    </recommendedName>
</protein>
<dbReference type="EMBL" id="U43400">
    <property type="protein sequence ID" value="AAC54714.1"/>
    <property type="molecule type" value="Genomic_DNA"/>
</dbReference>
<dbReference type="PIR" id="T41954">
    <property type="entry name" value="T41954"/>
</dbReference>
<dbReference type="Proteomes" id="UP000009246">
    <property type="component" value="Segment"/>
</dbReference>
<dbReference type="InterPro" id="IPR004290">
    <property type="entry name" value="Herpes_UL79"/>
</dbReference>
<dbReference type="Pfam" id="PF03049">
    <property type="entry name" value="Herpes_UL79"/>
    <property type="match status" value="1"/>
</dbReference>
<organismHost>
    <name type="scientific">Homo sapiens</name>
    <name type="common">Human</name>
    <dbReference type="NCBI Taxonomy" id="9606"/>
</organismHost>
<proteinExistence type="inferred from homology"/>
<comment type="similarity">
    <text evidence="1">Belongs to the herpesviridae UL79 family.</text>
</comment>
<reference key="1">
    <citation type="journal article" date="1996" name="J. Virol.">
        <title>Determination and analysis of the complete nucleotide sequence of human herpesvirus.</title>
        <authorList>
            <person name="Nicholas J."/>
        </authorList>
    </citation>
    <scope>NUCLEOTIDE SEQUENCE [LARGE SCALE GENOMIC DNA]</scope>
</reference>
<gene>
    <name type="primary">U52</name>
</gene>
<organism>
    <name type="scientific">Human herpesvirus 7 (strain JI)</name>
    <name type="common">HHV-7</name>
    <name type="synonym">Human T lymphotropic virus</name>
    <dbReference type="NCBI Taxonomy" id="57278"/>
    <lineage>
        <taxon>Viruses</taxon>
        <taxon>Duplodnaviria</taxon>
        <taxon>Heunggongvirae</taxon>
        <taxon>Peploviricota</taxon>
        <taxon>Herviviricetes</taxon>
        <taxon>Herpesvirales</taxon>
        <taxon>Orthoherpesviridae</taxon>
        <taxon>Betaherpesvirinae</taxon>
        <taxon>Roseolovirus</taxon>
        <taxon>Roseolovirus humanbeta7</taxon>
        <taxon>Human betaherpesvirus 7</taxon>
    </lineage>
</organism>
<sequence>MTQVGQYIISNNSTSNLILHITKKLVSGESLFNLKQEEILIIQNVCTLMFSHGIQILLLRETLHNIGVSDLVVLNRKVPDEFWFKIFCMIKQRSGSEILKHIFSEENAAQLSKKLHHTGIVKQIIESFFLDEFGLSITIPAEIIHDGNIMFSIGAIYNHRLLKLCRYFNKFWGQEVYEPFIRKICKHLWFGYLIFFDKIKISHGAFSQQKPEHRNGLFTFIQNDFKVFCGIVEKEAKVTECNLSDLFSIGPLQF</sequence>
<keyword id="KW-1185">Reference proteome</keyword>